<comment type="function">
    <text evidence="4">Short-chain dehydrogenase/reductase; part of the gene cluster that mediates the biosynthesis of the alkaloid (-)-FR901483, a potent immunosuppressant that shows efficacy in animal models and a probable inhibitor of purine nucleotide biosynthesis by targeting phosphoribosylpyrophosphate amidotransferase (PPAT) (PubMed:33372776). Within the pathway, FrzI catalyzes the formation of dephospho-(-)-FR901483 from the aza-tricyclic intermediate produced by FrzH (PubMed:33372776). The biosynthesis of (-)-FR901483 starts with the condensation of two L-tyrosines to yield (S,S)-dityrosyl-piperazine. This process occurs in 3 steps with the non-canonical nonribosomal peptide synthetase FrzA catalyzing the reduction of L-tyrosine into L-tyrosinal, the spontaneous condensation of 2 L-tyrosinal units, and the subsequent reduction by the NmrA-like family domain-containing oxidoreductase FrzB. The cytochrome P450 monooxygenase FrzC then performs coupling between N10 and C1' to morph the piperazine into a 1,4-diazabicyclo[3.2.1]octane spiro-fused to a 2,5-cyclohexadienone. The dienone portion is further reduced to cyclohexanone by the flavin-dependent reductase FrzD. The methyltranserases (MTs) FrzE and FrzF are then involved in the methylation at the C10' amine and the C4 phenolic oxygen, respectively. The order of the two MTs appear to be interchangeable. Cleavage of the C9-N10' bond by the dioxygenase FrzG then leads to formation of a conjugated iminium. In addition to the oxidation of C9, an additional dehydrogenation between C7 and C8 can occur to give a likely shunt product. The next biosynthetic step is the intramolecular aldol condensation catalyzed by the newly identified aldolase FrzH to yield an aza-tricyclic product with the formation of a C9-C3' bond (PubMed:33372776). The short-chain dehydrogenase/reductase FrzI then produces dephospho-(-)-FR901483 that is phosphorylated at C4'-OH into (-)-FR901483 by the phosphotransferase FrzJ (PubMed:33372776).</text>
</comment>
<comment type="catalytic activity">
    <reaction evidence="4">
        <text>(1S,3S,6S,7S,8R)-7-hydroxy-6-[(4-methoxyphenyl)methyl]-3-(methylamino)-5-azatricyclo[6.3.1.0(1,5)]dodecan-9-one + NADPH + H(+) = (1S,3S,6S,7S,8S,9S)-6-[(4-methoxyphenyl)methyl]-3-(methylamino)-5-azatricyclo[6.3.1.0(1,5)]dodecane-7,9-diol + NADP(+)</text>
        <dbReference type="Rhea" id="RHEA:83611"/>
        <dbReference type="ChEBI" id="CHEBI:15378"/>
        <dbReference type="ChEBI" id="CHEBI:57783"/>
        <dbReference type="ChEBI" id="CHEBI:58349"/>
        <dbReference type="ChEBI" id="CHEBI:233181"/>
        <dbReference type="ChEBI" id="CHEBI:233182"/>
    </reaction>
    <physiologicalReaction direction="left-to-right" evidence="4">
        <dbReference type="Rhea" id="RHEA:83612"/>
    </physiologicalReaction>
</comment>
<comment type="pathway">
    <text evidence="4">Secondary metabolite biosynthesis.</text>
</comment>
<comment type="similarity">
    <text evidence="6">Belongs to the short-chain dehydrogenases/reductases (SDR) family.</text>
</comment>
<sequence length="258" mass="27367">MNPPPSLLDKAAIVTGGSRGIGAAIAIELARRGAHVLITYNTASHKAQLVAEEIQKLGRKATVVQASSTDREGPNRIVQAAVSQYGRIDIIVNNAGMADDCLLQDLTHEFWDRIMDVNLRLPAFLVQAALQHLGPAPRIVNISSLAARAGYNATSVYAASKAALEGMTRAWATELGHRYNVTVNCVNPGPVDTDIMAVDENTDAEVVAYWNAKVKETPAAPRVGTPGDIAQIVAFLCEEGSRWCTGSVVNANGGLVTV</sequence>
<name>FRZI_CLASX</name>
<gene>
    <name evidence="5" type="primary">FrzI</name>
</gene>
<dbReference type="EC" id="1.1.1.-" evidence="4"/>
<dbReference type="EMBL" id="MW322046">
    <property type="protein sequence ID" value="QQO98484.1"/>
    <property type="molecule type" value="Genomic_DNA"/>
</dbReference>
<dbReference type="GO" id="GO:0016491">
    <property type="term" value="F:oxidoreductase activity"/>
    <property type="evidence" value="ECO:0007669"/>
    <property type="project" value="InterPro"/>
</dbReference>
<dbReference type="FunFam" id="3.40.50.720:FF:000374">
    <property type="entry name" value="3-oxoacyl-(Acyl-carrier-protein) reductase"/>
    <property type="match status" value="1"/>
</dbReference>
<dbReference type="Gene3D" id="3.40.50.720">
    <property type="entry name" value="NAD(P)-binding Rossmann-like Domain"/>
    <property type="match status" value="1"/>
</dbReference>
<dbReference type="InterPro" id="IPR036291">
    <property type="entry name" value="NAD(P)-bd_dom_sf"/>
</dbReference>
<dbReference type="InterPro" id="IPR020904">
    <property type="entry name" value="Sc_DH/Rdtase_CS"/>
</dbReference>
<dbReference type="InterPro" id="IPR002347">
    <property type="entry name" value="SDR_fam"/>
</dbReference>
<dbReference type="PANTHER" id="PTHR43639">
    <property type="entry name" value="OXIDOREDUCTASE, SHORT-CHAIN DEHYDROGENASE/REDUCTASE FAMILY (AFU_ORTHOLOGUE AFUA_5G02870)"/>
    <property type="match status" value="1"/>
</dbReference>
<dbReference type="PANTHER" id="PTHR43639:SF1">
    <property type="entry name" value="SHORT-CHAIN DEHYDROGENASE_REDUCTASE FAMILY PROTEIN"/>
    <property type="match status" value="1"/>
</dbReference>
<dbReference type="Pfam" id="PF13561">
    <property type="entry name" value="adh_short_C2"/>
    <property type="match status" value="1"/>
</dbReference>
<dbReference type="PRINTS" id="PR00081">
    <property type="entry name" value="GDHRDH"/>
</dbReference>
<dbReference type="PRINTS" id="PR00080">
    <property type="entry name" value="SDRFAMILY"/>
</dbReference>
<dbReference type="SMART" id="SM00822">
    <property type="entry name" value="PKS_KR"/>
    <property type="match status" value="1"/>
</dbReference>
<dbReference type="SUPFAM" id="SSF51735">
    <property type="entry name" value="NAD(P)-binding Rossmann-fold domains"/>
    <property type="match status" value="1"/>
</dbReference>
<dbReference type="PROSITE" id="PS00061">
    <property type="entry name" value="ADH_SHORT"/>
    <property type="match status" value="1"/>
</dbReference>
<organism>
    <name type="scientific">Cladobotryum sp</name>
    <dbReference type="NCBI Taxonomy" id="2040732"/>
    <lineage>
        <taxon>Eukaryota</taxon>
        <taxon>Fungi</taxon>
        <taxon>Dikarya</taxon>
        <taxon>Ascomycota</taxon>
        <taxon>Pezizomycotina</taxon>
        <taxon>Sordariomycetes</taxon>
        <taxon>Hypocreomycetidae</taxon>
        <taxon>Hypocreales</taxon>
        <taxon>Hypocreaceae</taxon>
        <taxon>Cladobotryum</taxon>
    </lineage>
</organism>
<proteinExistence type="evidence at protein level"/>
<feature type="chain" id="PRO_0000462337" description="Short-chain dehydrogenase/reductase FrzI">
    <location>
        <begin position="1"/>
        <end position="258"/>
    </location>
</feature>
<feature type="active site" description="Proton donor" evidence="2">
    <location>
        <position position="143"/>
    </location>
</feature>
<feature type="active site" description="Proton donor" evidence="2">
    <location>
        <position position="144"/>
    </location>
</feature>
<feature type="active site" description="Proton acceptor" evidence="3">
    <location>
        <position position="157"/>
    </location>
</feature>
<feature type="active site" description="Lowers pKa of active site Tyr" evidence="2">
    <location>
        <position position="161"/>
    </location>
</feature>
<feature type="binding site" evidence="1">
    <location>
        <position position="21"/>
    </location>
    <ligand>
        <name>NADP(+)</name>
        <dbReference type="ChEBI" id="CHEBI:58349"/>
    </ligand>
</feature>
<feature type="binding site" evidence="1">
    <location>
        <position position="41"/>
    </location>
    <ligand>
        <name>NADP(+)</name>
        <dbReference type="ChEBI" id="CHEBI:58349"/>
    </ligand>
</feature>
<feature type="binding site" evidence="2">
    <location>
        <position position="94"/>
    </location>
    <ligand>
        <name>NADP(+)</name>
        <dbReference type="ChEBI" id="CHEBI:58349"/>
    </ligand>
</feature>
<feature type="binding site" evidence="2">
    <location>
        <position position="157"/>
    </location>
    <ligand>
        <name>NADP(+)</name>
        <dbReference type="ChEBI" id="CHEBI:58349"/>
    </ligand>
</feature>
<feature type="binding site" evidence="2">
    <location>
        <position position="161"/>
    </location>
    <ligand>
        <name>NADP(+)</name>
        <dbReference type="ChEBI" id="CHEBI:58349"/>
    </ligand>
</feature>
<feature type="binding site" evidence="2">
    <location>
        <position position="191"/>
    </location>
    <ligand>
        <name>NADP(+)</name>
        <dbReference type="ChEBI" id="CHEBI:58349"/>
    </ligand>
</feature>
<feature type="binding site" evidence="1">
    <location>
        <position position="193"/>
    </location>
    <ligand>
        <name>NADP(+)</name>
        <dbReference type="ChEBI" id="CHEBI:58349"/>
    </ligand>
</feature>
<reference key="1">
    <citation type="journal article" date="2021" name="J. Am. Chem. Soc.">
        <title>Biosynthesis of the Immunosuppressant (-)-FR901483.</title>
        <authorList>
            <person name="Zhang Z."/>
            <person name="Tamura Y."/>
            <person name="Tang M."/>
            <person name="Qiao T."/>
            <person name="Sato M."/>
            <person name="Otsu Y."/>
            <person name="Sasamura S."/>
            <person name="Taniguchi M."/>
            <person name="Watanabe K."/>
            <person name="Tang Y."/>
        </authorList>
    </citation>
    <scope>NUCLEOTIDE SEQUENCE [GENOMIC DNA]</scope>
    <scope>FUNCTION</scope>
    <scope>CATALYTIC ACTIVITY</scope>
    <scope>PATHWAY</scope>
    <source>
        <strain>11231</strain>
    </source>
</reference>
<evidence type="ECO:0000250" key="1">
    <source>
        <dbReference type="UniProtKB" id="L0E2Z4"/>
    </source>
</evidence>
<evidence type="ECO:0000250" key="2">
    <source>
        <dbReference type="UniProtKB" id="O93868"/>
    </source>
</evidence>
<evidence type="ECO:0000255" key="3">
    <source>
        <dbReference type="PROSITE-ProRule" id="PRU10001"/>
    </source>
</evidence>
<evidence type="ECO:0000269" key="4">
    <source>
    </source>
</evidence>
<evidence type="ECO:0000303" key="5">
    <source>
    </source>
</evidence>
<evidence type="ECO:0000305" key="6"/>
<protein>
    <recommendedName>
        <fullName evidence="5">Short-chain dehydrogenase/reductase FrzI</fullName>
        <ecNumber evidence="4">1.1.1.-</ecNumber>
    </recommendedName>
    <alternativeName>
        <fullName evidence="5">FR901483 biosynthesis clusters protein I</fullName>
    </alternativeName>
</protein>
<keyword id="KW-0521">NADP</keyword>
<keyword id="KW-0560">Oxidoreductase</keyword>
<accession>A0A7T8F1N2</accession>